<dbReference type="EMBL" id="AE017198">
    <property type="protein sequence ID" value="AAS08133.1"/>
    <property type="molecule type" value="Genomic_DNA"/>
</dbReference>
<dbReference type="RefSeq" id="WP_004898620.1">
    <property type="nucleotide sequence ID" value="NC_005362.1"/>
</dbReference>
<dbReference type="KEGG" id="ljo:LJ_0151"/>
<dbReference type="eggNOG" id="COG3158">
    <property type="taxonomic scope" value="Bacteria"/>
</dbReference>
<dbReference type="HOGENOM" id="CLU_008142_4_1_9"/>
<dbReference type="Proteomes" id="UP000000581">
    <property type="component" value="Chromosome"/>
</dbReference>
<dbReference type="GO" id="GO:0005886">
    <property type="term" value="C:plasma membrane"/>
    <property type="evidence" value="ECO:0007669"/>
    <property type="project" value="UniProtKB-SubCell"/>
</dbReference>
<dbReference type="GO" id="GO:0015079">
    <property type="term" value="F:potassium ion transmembrane transporter activity"/>
    <property type="evidence" value="ECO:0007669"/>
    <property type="project" value="UniProtKB-UniRule"/>
</dbReference>
<dbReference type="GO" id="GO:0015293">
    <property type="term" value="F:symporter activity"/>
    <property type="evidence" value="ECO:0007669"/>
    <property type="project" value="UniProtKB-UniRule"/>
</dbReference>
<dbReference type="HAMAP" id="MF_01522">
    <property type="entry name" value="Kup"/>
    <property type="match status" value="1"/>
</dbReference>
<dbReference type="InterPro" id="IPR003855">
    <property type="entry name" value="K+_transporter"/>
</dbReference>
<dbReference type="InterPro" id="IPR053952">
    <property type="entry name" value="K_trans_C"/>
</dbReference>
<dbReference type="InterPro" id="IPR053951">
    <property type="entry name" value="K_trans_N"/>
</dbReference>
<dbReference type="InterPro" id="IPR023051">
    <property type="entry name" value="Kup"/>
</dbReference>
<dbReference type="PANTHER" id="PTHR30540:SF83">
    <property type="entry name" value="K+ POTASSIUM TRANSPORTER"/>
    <property type="match status" value="1"/>
</dbReference>
<dbReference type="PANTHER" id="PTHR30540">
    <property type="entry name" value="OSMOTIC STRESS POTASSIUM TRANSPORTER"/>
    <property type="match status" value="1"/>
</dbReference>
<dbReference type="Pfam" id="PF02705">
    <property type="entry name" value="K_trans"/>
    <property type="match status" value="1"/>
</dbReference>
<dbReference type="Pfam" id="PF22776">
    <property type="entry name" value="K_trans_C"/>
    <property type="match status" value="1"/>
</dbReference>
<sequence length="665" mass="73826">MNNGVRKKVTLAGLLVSIGIVYGDIGTSPLYVMKAIVNENGGIASVNREYIVGSISLILWTITLLTTVKYVLIALKATNHGEGGIFSLYALVRKKAKWLVLPALIGGAALLADGTLTPAVTVTTAIEGLKNMRFGNDIPVPNQNSVLIITIIILLFLFSIQRMGTSIIGKTFGPIMLIWFTFLGLTGAMNLSHDLSLLEALNPVLAVKILFSPANKVGVLILGAVFLATTGAEALYSDVGHVGKGNIMASWPYVFICLALNYLGQGVWILENPNYHAGNTDFNPFFEALPSQWKFFAIILATLAAIIASQALITGSFTLVSEASGLKFLPRMKIIYPSTEQGQIFIPSINKMLCAATIGIVFLFKTSEHMEAAYGLAITVTMLMTTILLFEYLSLKKVNILLRLVFLFLFGAIESMFLISSLAKFLHGGYVTVIIAAFIGAIMYIWYFGNKVRDRREAKNAYVRLDEYTSMLSNLSHDDSVPLYATNLVYMAKVKYNKFIKRDILYSILDKRPKRAHAYWFVTVNVTNEPFTAEYAINTYGTKNVINVQLYLGFKQQQKVNVYLRQIVHELIKDGTIESQPQEYTTTPGRDVGDFKFVIVNDVISPQTQLNTYEKWLVESRVWLQNLSSNPAVWFGLEYADTVVERVPLILGSQNIKSIQRTKLK</sequence>
<evidence type="ECO:0000255" key="1">
    <source>
        <dbReference type="HAMAP-Rule" id="MF_01522"/>
    </source>
</evidence>
<keyword id="KW-1003">Cell membrane</keyword>
<keyword id="KW-0406">Ion transport</keyword>
<keyword id="KW-0472">Membrane</keyword>
<keyword id="KW-0630">Potassium</keyword>
<keyword id="KW-0633">Potassium transport</keyword>
<keyword id="KW-0769">Symport</keyword>
<keyword id="KW-0812">Transmembrane</keyword>
<keyword id="KW-1133">Transmembrane helix</keyword>
<keyword id="KW-0813">Transport</keyword>
<proteinExistence type="inferred from homology"/>
<accession>Q74LN2</accession>
<feature type="chain" id="PRO_0000209023" description="Probable potassium transport system protein Kup 2">
    <location>
        <begin position="1"/>
        <end position="665"/>
    </location>
</feature>
<feature type="transmembrane region" description="Helical" evidence="1">
    <location>
        <begin position="13"/>
        <end position="33"/>
    </location>
</feature>
<feature type="transmembrane region" description="Helical" evidence="1">
    <location>
        <begin position="55"/>
        <end position="75"/>
    </location>
</feature>
<feature type="transmembrane region" description="Helical" evidence="1">
    <location>
        <begin position="98"/>
        <end position="118"/>
    </location>
</feature>
<feature type="transmembrane region" description="Helical" evidence="1">
    <location>
        <begin position="138"/>
        <end position="158"/>
    </location>
</feature>
<feature type="transmembrane region" description="Helical" evidence="1">
    <location>
        <begin position="167"/>
        <end position="187"/>
    </location>
</feature>
<feature type="transmembrane region" description="Helical" evidence="1">
    <location>
        <begin position="195"/>
        <end position="215"/>
    </location>
</feature>
<feature type="transmembrane region" description="Helical" evidence="1">
    <location>
        <begin position="217"/>
        <end position="237"/>
    </location>
</feature>
<feature type="transmembrane region" description="Helical" evidence="1">
    <location>
        <begin position="250"/>
        <end position="270"/>
    </location>
</feature>
<feature type="transmembrane region" description="Helical" evidence="1">
    <location>
        <begin position="295"/>
        <end position="315"/>
    </location>
</feature>
<feature type="transmembrane region" description="Helical" evidence="1">
    <location>
        <begin position="344"/>
        <end position="364"/>
    </location>
</feature>
<feature type="transmembrane region" description="Helical" evidence="1">
    <location>
        <begin position="375"/>
        <end position="395"/>
    </location>
</feature>
<feature type="transmembrane region" description="Helical" evidence="1">
    <location>
        <begin position="400"/>
        <end position="420"/>
    </location>
</feature>
<feature type="transmembrane region" description="Helical" evidence="1">
    <location>
        <begin position="428"/>
        <end position="448"/>
    </location>
</feature>
<gene>
    <name evidence="1" type="primary">kup2</name>
    <name type="ordered locus">LJ_0151</name>
</gene>
<organism>
    <name type="scientific">Lactobacillus johnsonii (strain CNCM I-12250 / La1 / NCC 533)</name>
    <dbReference type="NCBI Taxonomy" id="257314"/>
    <lineage>
        <taxon>Bacteria</taxon>
        <taxon>Bacillati</taxon>
        <taxon>Bacillota</taxon>
        <taxon>Bacilli</taxon>
        <taxon>Lactobacillales</taxon>
        <taxon>Lactobacillaceae</taxon>
        <taxon>Lactobacillus</taxon>
    </lineage>
</organism>
<protein>
    <recommendedName>
        <fullName evidence="1">Probable potassium transport system protein Kup 2</fullName>
    </recommendedName>
</protein>
<reference key="1">
    <citation type="journal article" date="2004" name="Proc. Natl. Acad. Sci. U.S.A.">
        <title>The genome sequence of the probiotic intestinal bacterium Lactobacillus johnsonii NCC 533.</title>
        <authorList>
            <person name="Pridmore R.D."/>
            <person name="Berger B."/>
            <person name="Desiere F."/>
            <person name="Vilanova D."/>
            <person name="Barretto C."/>
            <person name="Pittet A.-C."/>
            <person name="Zwahlen M.-C."/>
            <person name="Rouvet M."/>
            <person name="Altermann E."/>
            <person name="Barrangou R."/>
            <person name="Mollet B."/>
            <person name="Mercenier A."/>
            <person name="Klaenhammer T."/>
            <person name="Arigoni F."/>
            <person name="Schell M.A."/>
        </authorList>
    </citation>
    <scope>NUCLEOTIDE SEQUENCE [LARGE SCALE GENOMIC DNA]</scope>
    <source>
        <strain>CNCM I-1225 / La1 / NCC 533</strain>
    </source>
</reference>
<name>KUP2_LACJO</name>
<comment type="function">
    <text evidence="1">Transport of potassium into the cell. Likely operates as a K(+):H(+) symporter.</text>
</comment>
<comment type="catalytic activity">
    <reaction evidence="1">
        <text>K(+)(in) + H(+)(in) = K(+)(out) + H(+)(out)</text>
        <dbReference type="Rhea" id="RHEA:28490"/>
        <dbReference type="ChEBI" id="CHEBI:15378"/>
        <dbReference type="ChEBI" id="CHEBI:29103"/>
    </reaction>
    <physiologicalReaction direction="right-to-left" evidence="1">
        <dbReference type="Rhea" id="RHEA:28492"/>
    </physiologicalReaction>
</comment>
<comment type="subcellular location">
    <subcellularLocation>
        <location evidence="1">Cell membrane</location>
        <topology evidence="1">Multi-pass membrane protein</topology>
    </subcellularLocation>
</comment>
<comment type="similarity">
    <text evidence="1">Belongs to the HAK/KUP transporter (TC 2.A.72) family.</text>
</comment>